<evidence type="ECO:0000255" key="1">
    <source>
        <dbReference type="HAMAP-Rule" id="MF_00270"/>
    </source>
</evidence>
<evidence type="ECO:0000305" key="2"/>
<gene>
    <name evidence="1" type="primary">rpsR</name>
    <name type="ordered locus">RPD_2986</name>
</gene>
<dbReference type="EMBL" id="CP000283">
    <property type="protein sequence ID" value="ABE40212.1"/>
    <property type="molecule type" value="Genomic_DNA"/>
</dbReference>
<dbReference type="SMR" id="Q135M7"/>
<dbReference type="STRING" id="316057.RPD_2986"/>
<dbReference type="KEGG" id="rpd:RPD_2986"/>
<dbReference type="eggNOG" id="COG0238">
    <property type="taxonomic scope" value="Bacteria"/>
</dbReference>
<dbReference type="HOGENOM" id="CLU_148710_2_3_5"/>
<dbReference type="BioCyc" id="RPAL316057:RPD_RS15000-MONOMER"/>
<dbReference type="Proteomes" id="UP000001818">
    <property type="component" value="Chromosome"/>
</dbReference>
<dbReference type="GO" id="GO:0022627">
    <property type="term" value="C:cytosolic small ribosomal subunit"/>
    <property type="evidence" value="ECO:0007669"/>
    <property type="project" value="TreeGrafter"/>
</dbReference>
<dbReference type="GO" id="GO:0070181">
    <property type="term" value="F:small ribosomal subunit rRNA binding"/>
    <property type="evidence" value="ECO:0007669"/>
    <property type="project" value="TreeGrafter"/>
</dbReference>
<dbReference type="GO" id="GO:0003735">
    <property type="term" value="F:structural constituent of ribosome"/>
    <property type="evidence" value="ECO:0007669"/>
    <property type="project" value="InterPro"/>
</dbReference>
<dbReference type="GO" id="GO:0006412">
    <property type="term" value="P:translation"/>
    <property type="evidence" value="ECO:0007669"/>
    <property type="project" value="UniProtKB-UniRule"/>
</dbReference>
<dbReference type="FunFam" id="4.10.640.10:FF:000006">
    <property type="entry name" value="30S ribosomal protein S18"/>
    <property type="match status" value="1"/>
</dbReference>
<dbReference type="Gene3D" id="4.10.640.10">
    <property type="entry name" value="Ribosomal protein S18"/>
    <property type="match status" value="1"/>
</dbReference>
<dbReference type="HAMAP" id="MF_00270">
    <property type="entry name" value="Ribosomal_bS18"/>
    <property type="match status" value="1"/>
</dbReference>
<dbReference type="InterPro" id="IPR001648">
    <property type="entry name" value="Ribosomal_bS18"/>
</dbReference>
<dbReference type="InterPro" id="IPR018275">
    <property type="entry name" value="Ribosomal_bS18_CS"/>
</dbReference>
<dbReference type="InterPro" id="IPR036870">
    <property type="entry name" value="Ribosomal_bS18_sf"/>
</dbReference>
<dbReference type="NCBIfam" id="TIGR00165">
    <property type="entry name" value="S18"/>
    <property type="match status" value="1"/>
</dbReference>
<dbReference type="PANTHER" id="PTHR13479">
    <property type="entry name" value="30S RIBOSOMAL PROTEIN S18"/>
    <property type="match status" value="1"/>
</dbReference>
<dbReference type="PANTHER" id="PTHR13479:SF40">
    <property type="entry name" value="SMALL RIBOSOMAL SUBUNIT PROTEIN BS18M"/>
    <property type="match status" value="1"/>
</dbReference>
<dbReference type="Pfam" id="PF01084">
    <property type="entry name" value="Ribosomal_S18"/>
    <property type="match status" value="1"/>
</dbReference>
<dbReference type="PRINTS" id="PR00974">
    <property type="entry name" value="RIBOSOMALS18"/>
</dbReference>
<dbReference type="SUPFAM" id="SSF46911">
    <property type="entry name" value="Ribosomal protein S18"/>
    <property type="match status" value="1"/>
</dbReference>
<dbReference type="PROSITE" id="PS00057">
    <property type="entry name" value="RIBOSOMAL_S18"/>
    <property type="match status" value="1"/>
</dbReference>
<feature type="chain" id="PRO_1000003587" description="Small ribosomal subunit protein bS18">
    <location>
        <begin position="1"/>
        <end position="79"/>
    </location>
</feature>
<organism>
    <name type="scientific">Rhodopseudomonas palustris (strain BisB5)</name>
    <dbReference type="NCBI Taxonomy" id="316057"/>
    <lineage>
        <taxon>Bacteria</taxon>
        <taxon>Pseudomonadati</taxon>
        <taxon>Pseudomonadota</taxon>
        <taxon>Alphaproteobacteria</taxon>
        <taxon>Hyphomicrobiales</taxon>
        <taxon>Nitrobacteraceae</taxon>
        <taxon>Rhodopseudomonas</taxon>
    </lineage>
</organism>
<reference key="1">
    <citation type="submission" date="2006-03" db="EMBL/GenBank/DDBJ databases">
        <title>Complete sequence of Rhodopseudomonas palustris BisB5.</title>
        <authorList>
            <consortium name="US DOE Joint Genome Institute"/>
            <person name="Copeland A."/>
            <person name="Lucas S."/>
            <person name="Lapidus A."/>
            <person name="Barry K."/>
            <person name="Detter J.C."/>
            <person name="Glavina del Rio T."/>
            <person name="Hammon N."/>
            <person name="Israni S."/>
            <person name="Dalin E."/>
            <person name="Tice H."/>
            <person name="Pitluck S."/>
            <person name="Chain P."/>
            <person name="Malfatti S."/>
            <person name="Shin M."/>
            <person name="Vergez L."/>
            <person name="Schmutz J."/>
            <person name="Larimer F."/>
            <person name="Land M."/>
            <person name="Hauser L."/>
            <person name="Pelletier D.A."/>
            <person name="Kyrpides N."/>
            <person name="Lykidis A."/>
            <person name="Oda Y."/>
            <person name="Harwood C.S."/>
            <person name="Richardson P."/>
        </authorList>
    </citation>
    <scope>NUCLEOTIDE SEQUENCE [LARGE SCALE GENOMIC DNA]</scope>
    <source>
        <strain>BisB5</strain>
    </source>
</reference>
<proteinExistence type="inferred from homology"/>
<protein>
    <recommendedName>
        <fullName evidence="1">Small ribosomal subunit protein bS18</fullName>
    </recommendedName>
    <alternativeName>
        <fullName evidence="2">30S ribosomal protein S18</fullName>
    </alternativeName>
</protein>
<accession>Q135M7</accession>
<name>RS18_RHOPS</name>
<keyword id="KW-0687">Ribonucleoprotein</keyword>
<keyword id="KW-0689">Ribosomal protein</keyword>
<keyword id="KW-0694">RNA-binding</keyword>
<keyword id="KW-0699">rRNA-binding</keyword>
<sequence>MAEAGARRPFFRRRKTCPFTGTNAPKIDYKDSKLLMRYVSERGKIVPSRITAVSAKKQRELARAIKRARFLGLLPYVIR</sequence>
<comment type="function">
    <text evidence="1">Binds as a heterodimer with protein bS6 to the central domain of the 16S rRNA, where it helps stabilize the platform of the 30S subunit.</text>
</comment>
<comment type="subunit">
    <text evidence="1">Part of the 30S ribosomal subunit. Forms a tight heterodimer with protein bS6.</text>
</comment>
<comment type="similarity">
    <text evidence="1">Belongs to the bacterial ribosomal protein bS18 family.</text>
</comment>